<feature type="chain" id="PRO_0000267575" description="Type III pantothenate kinase">
    <location>
        <begin position="1"/>
        <end position="248"/>
    </location>
</feature>
<feature type="active site" description="Proton acceptor" evidence="2">
    <location>
        <position position="101"/>
    </location>
</feature>
<feature type="binding site" evidence="1">
    <location>
        <begin position="6"/>
        <end position="13"/>
    </location>
    <ligand>
        <name>ATP</name>
        <dbReference type="ChEBI" id="CHEBI:30616"/>
    </ligand>
</feature>
<feature type="binding site">
    <location>
        <position position="92"/>
    </location>
    <ligand>
        <name>substrate</name>
    </ligand>
</feature>
<feature type="binding site">
    <location>
        <begin position="99"/>
        <end position="102"/>
    </location>
    <ligand>
        <name>substrate</name>
    </ligand>
</feature>
<feature type="binding site" evidence="5">
    <location>
        <position position="121"/>
    </location>
    <ligand>
        <name>K(+)</name>
        <dbReference type="ChEBI" id="CHEBI:29103"/>
    </ligand>
</feature>
<feature type="binding site" evidence="2">
    <location>
        <position position="124"/>
    </location>
    <ligand>
        <name>ATP</name>
        <dbReference type="ChEBI" id="CHEBI:30616"/>
    </ligand>
</feature>
<feature type="binding site">
    <location>
        <position position="180"/>
    </location>
    <ligand>
        <name>substrate</name>
    </ligand>
</feature>
<feature type="mutagenesis site" description="96-fold reduction in activity." evidence="3">
    <original>N</original>
    <variation>G</variation>
    <location>
        <position position="9"/>
    </location>
</feature>
<feature type="mutagenesis site" description="7-fold reduction in activity." evidence="3">
    <original>K</original>
    <variation>A</variation>
    <location>
        <position position="13"/>
    </location>
</feature>
<feature type="mutagenesis site" description="5-fold reduction in activity." evidence="3">
    <original>D</original>
    <variation>A</variation>
    <location>
        <position position="101"/>
    </location>
</feature>
<feature type="mutagenesis site" description="Loss of activity." evidence="3">
    <original>D</original>
    <variation>A</variation>
    <location>
        <position position="121"/>
    </location>
</feature>
<feature type="mutagenesis site" description="No change in activity." evidence="3">
    <original>H</original>
    <variation>A</variation>
    <location>
        <position position="156"/>
    </location>
</feature>
<feature type="mutagenesis site" description="2.5-fold reduction in activity." evidence="3">
    <original>T</original>
    <variation>A</variation>
    <location>
        <position position="157"/>
    </location>
</feature>
<feature type="strand" evidence="6">
    <location>
        <begin position="1"/>
        <end position="7"/>
    </location>
</feature>
<feature type="strand" evidence="6">
    <location>
        <begin position="12"/>
        <end position="18"/>
    </location>
</feature>
<feature type="turn" evidence="6">
    <location>
        <begin position="19"/>
        <end position="21"/>
    </location>
</feature>
<feature type="strand" evidence="6">
    <location>
        <begin position="22"/>
        <end position="31"/>
    </location>
</feature>
<feature type="helix" evidence="6">
    <location>
        <begin position="32"/>
        <end position="41"/>
    </location>
</feature>
<feature type="turn" evidence="6">
    <location>
        <begin position="42"/>
        <end position="44"/>
    </location>
</feature>
<feature type="strand" evidence="6">
    <location>
        <begin position="47"/>
        <end position="54"/>
    </location>
</feature>
<feature type="helix" evidence="6">
    <location>
        <begin position="58"/>
        <end position="71"/>
    </location>
</feature>
<feature type="strand" evidence="6">
    <location>
        <begin position="83"/>
        <end position="85"/>
    </location>
</feature>
<feature type="strand" evidence="6">
    <location>
        <begin position="92"/>
        <end position="94"/>
    </location>
</feature>
<feature type="helix" evidence="6">
    <location>
        <begin position="95"/>
        <end position="97"/>
    </location>
</feature>
<feature type="helix" evidence="6">
    <location>
        <begin position="100"/>
        <end position="113"/>
    </location>
</feature>
<feature type="strand" evidence="6">
    <location>
        <begin position="117"/>
        <end position="131"/>
    </location>
</feature>
<feature type="strand" evidence="6">
    <location>
        <begin position="135"/>
        <end position="144"/>
    </location>
</feature>
<feature type="helix" evidence="6">
    <location>
        <begin position="146"/>
        <end position="156"/>
    </location>
</feature>
<feature type="strand" evidence="6">
    <location>
        <begin position="157"/>
        <end position="159"/>
    </location>
</feature>
<feature type="helix" evidence="6">
    <location>
        <begin position="164"/>
        <end position="170"/>
    </location>
</feature>
<feature type="strand" evidence="6">
    <location>
        <begin position="177"/>
        <end position="179"/>
    </location>
</feature>
<feature type="helix" evidence="6">
    <location>
        <begin position="180"/>
        <end position="207"/>
    </location>
</feature>
<feature type="strand" evidence="6">
    <location>
        <begin position="212"/>
        <end position="217"/>
    </location>
</feature>
<feature type="helix" evidence="6">
    <location>
        <begin position="220"/>
        <end position="222"/>
    </location>
</feature>
<feature type="helix" evidence="6">
    <location>
        <begin position="224"/>
        <end position="226"/>
    </location>
</feature>
<feature type="helix" evidence="6">
    <location>
        <begin position="236"/>
        <end position="244"/>
    </location>
</feature>
<name>COAX_PSEAE</name>
<protein>
    <recommendedName>
        <fullName>Type III pantothenate kinase</fullName>
        <ecNumber evidence="3">2.7.1.33</ecNumber>
    </recommendedName>
    <alternativeName>
        <fullName>PanK-III</fullName>
    </alternativeName>
    <alternativeName>
        <fullName>Pantothenic acid kinase</fullName>
    </alternativeName>
</protein>
<gene>
    <name type="primary">coaX</name>
    <name type="synonym">coaA</name>
    <name type="ordered locus">PA4279</name>
</gene>
<reference key="1">
    <citation type="journal article" date="2000" name="Nature">
        <title>Complete genome sequence of Pseudomonas aeruginosa PAO1, an opportunistic pathogen.</title>
        <authorList>
            <person name="Stover C.K."/>
            <person name="Pham X.-Q.T."/>
            <person name="Erwin A.L."/>
            <person name="Mizoguchi S.D."/>
            <person name="Warrener P."/>
            <person name="Hickey M.J."/>
            <person name="Brinkman F.S.L."/>
            <person name="Hufnagle W.O."/>
            <person name="Kowalik D.J."/>
            <person name="Lagrou M."/>
            <person name="Garber R.L."/>
            <person name="Goltry L."/>
            <person name="Tolentino E."/>
            <person name="Westbrock-Wadman S."/>
            <person name="Yuan Y."/>
            <person name="Brody L.L."/>
            <person name="Coulter S.N."/>
            <person name="Folger K.R."/>
            <person name="Kas A."/>
            <person name="Larbig K."/>
            <person name="Lim R.M."/>
            <person name="Smith K.A."/>
            <person name="Spencer D.H."/>
            <person name="Wong G.K.-S."/>
            <person name="Wu Z."/>
            <person name="Paulsen I.T."/>
            <person name="Reizer J."/>
            <person name="Saier M.H. Jr."/>
            <person name="Hancock R.E.W."/>
            <person name="Lory S."/>
            <person name="Olson M.V."/>
        </authorList>
    </citation>
    <scope>NUCLEOTIDE SEQUENCE [LARGE SCALE GENOMIC DNA]</scope>
    <source>
        <strain>ATCC 15692 / DSM 22644 / CIP 104116 / JCM 14847 / LMG 12228 / 1C / PRS 101 / PAO1</strain>
    </source>
</reference>
<reference key="2">
    <citation type="journal article" date="2006" name="Structure">
        <title>Prokaryotic type II and type III pantothenate kinases: the same monomer fold creates dimers with distinct catalytic properties.</title>
        <authorList>
            <person name="Hong B.S."/>
            <person name="Yun M.K."/>
            <person name="Zhang Y.-M."/>
            <person name="Chohnan S."/>
            <person name="Rock C.O."/>
            <person name="White S.W."/>
            <person name="Jackowski S."/>
            <person name="Park H.-W."/>
            <person name="Leonardi R."/>
        </authorList>
    </citation>
    <scope>X-RAY CRYSTALLOGRAPHY (1.9 ANGSTROMS) OF APOPROTEIN AND COMPLEX WITH SUBSTRATE</scope>
    <scope>FUNCTION</scope>
    <scope>CATALYTIC ACTIVITY</scope>
    <scope>COFACTOR</scope>
    <scope>SUBUNIT</scope>
    <scope>KINETIC PARAMETERS</scope>
    <scope>MUTAGENESIS OF ASN-9; LYS-13; ASP-101; ASP-121; HIS-156 AND THR-157</scope>
    <source>
        <strain>ATCC 15692 / DSM 22644 / CIP 104116 / JCM 14847 / LMG 12228 / 1C / PRS 101 / PAO1</strain>
    </source>
</reference>
<organism>
    <name type="scientific">Pseudomonas aeruginosa (strain ATCC 15692 / DSM 22644 / CIP 104116 / JCM 14847 / LMG 12228 / 1C / PRS 101 / PAO1)</name>
    <dbReference type="NCBI Taxonomy" id="208964"/>
    <lineage>
        <taxon>Bacteria</taxon>
        <taxon>Pseudomonadati</taxon>
        <taxon>Pseudomonadota</taxon>
        <taxon>Gammaproteobacteria</taxon>
        <taxon>Pseudomonadales</taxon>
        <taxon>Pseudomonadaceae</taxon>
        <taxon>Pseudomonas</taxon>
    </lineage>
</organism>
<comment type="function">
    <text evidence="3">Catalyzes the phosphorylation of pantothenate (Pan), the first step in CoA biosynthesis. Can utilize a wide range of phosphoryl donors other than ATP, and does not discriminate between purine- and pyrimidine-based nucleotides or deoxynucleotides. Is responsible for the resistance of P.aeruginosa to the pantothenamide antibiotics, since it cannot bind and phosphorylate these pantothenate analogs.</text>
</comment>
<comment type="catalytic activity">
    <reaction evidence="3">
        <text>(R)-pantothenate + ATP = (R)-4'-phosphopantothenate + ADP + H(+)</text>
        <dbReference type="Rhea" id="RHEA:16373"/>
        <dbReference type="ChEBI" id="CHEBI:10986"/>
        <dbReference type="ChEBI" id="CHEBI:15378"/>
        <dbReference type="ChEBI" id="CHEBI:29032"/>
        <dbReference type="ChEBI" id="CHEBI:30616"/>
        <dbReference type="ChEBI" id="CHEBI:456216"/>
        <dbReference type="EC" id="2.7.1.33"/>
    </reaction>
</comment>
<comment type="cofactor">
    <cofactor evidence="3">
        <name>K(+)</name>
        <dbReference type="ChEBI" id="CHEBI:29103"/>
    </cofactor>
    <cofactor evidence="3">
        <name>NH4(+)</name>
        <dbReference type="ChEBI" id="CHEBI:28938"/>
    </cofactor>
    <text evidence="3">Monovalent cations. Strong preference for ammonium over potassium.</text>
</comment>
<comment type="biophysicochemical properties">
    <kinetics>
        <KM evidence="3">14 uM for pantothenate (in the absence of ammonium)</KM>
        <KM evidence="3">20 uM for pantothenate (in the presence of ammonium)</KM>
        <KM evidence="3">7.2 mM for ATP (in the absence of ammonium)</KM>
        <KM evidence="3">3.2 mM for ATP (in the presence of ammonium)</KM>
        <text evidence="3">kcat is 12.5 min(-1) for the phosphorylation of pantothenate in the absence of ammonium. kcat is 25 min(-1) for the phosphorylation of pantothenate in the presence of ammonium.</text>
    </kinetics>
</comment>
<comment type="pathway">
    <text>Cofactor biosynthesis; coenzyme A biosynthesis; CoA from (R)-pantothenate: step 1/5.</text>
</comment>
<comment type="subunit">
    <text evidence="3">Homodimer.</text>
</comment>
<comment type="subcellular location">
    <subcellularLocation>
        <location evidence="1">Cytoplasm</location>
    </subcellularLocation>
</comment>
<comment type="similarity">
    <text evidence="4">Belongs to the type III pantothenate kinase family.</text>
</comment>
<accession>Q9HWC1</accession>
<sequence>MILELDCGNSLIKWRVIEGAARSVAGGLAESDDALVEQLTSQQALPVRACRLVSVRSEQETSQLVARLEQLFPVSALVASSGKQLAGVRNGYLDYQRLGLDRWLALVAAHHLAKKACLVIDLGTAVTSDLVAADGVHLGGYICPGMTLMRSQLRTHTRRIRYDDAEARRALASLQPGQATAEAVERGCLLMLRGFVREQYAMACELLGPDCEIFLTGGDAELVRDELAGARIMPDLVFVGLALACPIE</sequence>
<dbReference type="EC" id="2.7.1.33" evidence="3"/>
<dbReference type="EMBL" id="AE004091">
    <property type="protein sequence ID" value="AAG07667.1"/>
    <property type="molecule type" value="Genomic_DNA"/>
</dbReference>
<dbReference type="PIR" id="H83111">
    <property type="entry name" value="H83111"/>
</dbReference>
<dbReference type="RefSeq" id="NP_252969.1">
    <property type="nucleotide sequence ID" value="NC_002516.2"/>
</dbReference>
<dbReference type="RefSeq" id="WP_003093768.1">
    <property type="nucleotide sequence ID" value="NZ_QZGE01000028.1"/>
</dbReference>
<dbReference type="PDB" id="2F9T">
    <property type="method" value="X-ray"/>
    <property type="resolution" value="2.20 A"/>
    <property type="chains" value="A/B=1-248"/>
</dbReference>
<dbReference type="PDB" id="2F9W">
    <property type="method" value="X-ray"/>
    <property type="resolution" value="1.90 A"/>
    <property type="chains" value="A/B=1-248"/>
</dbReference>
<dbReference type="PDBsum" id="2F9T"/>
<dbReference type="PDBsum" id="2F9W"/>
<dbReference type="SMR" id="Q9HWC1"/>
<dbReference type="STRING" id="208964.PA4279"/>
<dbReference type="ChEMBL" id="CHEMBL4295625"/>
<dbReference type="PaxDb" id="208964-PA4279"/>
<dbReference type="DNASU" id="881667"/>
<dbReference type="GeneID" id="881667"/>
<dbReference type="KEGG" id="pae:PA4279"/>
<dbReference type="PATRIC" id="fig|208964.12.peg.4480"/>
<dbReference type="PseudoCAP" id="PA4279"/>
<dbReference type="HOGENOM" id="CLU_066627_0_1_6"/>
<dbReference type="InParanoid" id="Q9HWC1"/>
<dbReference type="OrthoDB" id="9781305at2"/>
<dbReference type="PhylomeDB" id="Q9HWC1"/>
<dbReference type="BioCyc" id="PAER208964:G1FZ6-4358-MONOMER"/>
<dbReference type="BRENDA" id="2.7.1.33">
    <property type="organism ID" value="5087"/>
</dbReference>
<dbReference type="UniPathway" id="UPA00241">
    <property type="reaction ID" value="UER00352"/>
</dbReference>
<dbReference type="EvolutionaryTrace" id="Q9HWC1"/>
<dbReference type="Proteomes" id="UP000002438">
    <property type="component" value="Chromosome"/>
</dbReference>
<dbReference type="GO" id="GO:0005737">
    <property type="term" value="C:cytoplasm"/>
    <property type="evidence" value="ECO:0007669"/>
    <property type="project" value="UniProtKB-SubCell"/>
</dbReference>
<dbReference type="GO" id="GO:0005524">
    <property type="term" value="F:ATP binding"/>
    <property type="evidence" value="ECO:0007669"/>
    <property type="project" value="UniProtKB-UniRule"/>
</dbReference>
<dbReference type="GO" id="GO:0046872">
    <property type="term" value="F:metal ion binding"/>
    <property type="evidence" value="ECO:0007669"/>
    <property type="project" value="UniProtKB-KW"/>
</dbReference>
<dbReference type="GO" id="GO:0004594">
    <property type="term" value="F:pantothenate kinase activity"/>
    <property type="evidence" value="ECO:0007669"/>
    <property type="project" value="UniProtKB-UniRule"/>
</dbReference>
<dbReference type="GO" id="GO:0015937">
    <property type="term" value="P:coenzyme A biosynthetic process"/>
    <property type="evidence" value="ECO:0007669"/>
    <property type="project" value="UniProtKB-UniRule"/>
</dbReference>
<dbReference type="GO" id="GO:0046677">
    <property type="term" value="P:response to antibiotic"/>
    <property type="evidence" value="ECO:0007669"/>
    <property type="project" value="UniProtKB-KW"/>
</dbReference>
<dbReference type="CDD" id="cd24015">
    <property type="entry name" value="ASKHA_NBD_PanK-III"/>
    <property type="match status" value="1"/>
</dbReference>
<dbReference type="Gene3D" id="3.30.420.40">
    <property type="match status" value="2"/>
</dbReference>
<dbReference type="HAMAP" id="MF_01274">
    <property type="entry name" value="Pantothen_kinase_3"/>
    <property type="match status" value="1"/>
</dbReference>
<dbReference type="InterPro" id="IPR043129">
    <property type="entry name" value="ATPase_NBD"/>
</dbReference>
<dbReference type="InterPro" id="IPR004619">
    <property type="entry name" value="Type_III_PanK"/>
</dbReference>
<dbReference type="NCBIfam" id="TIGR00671">
    <property type="entry name" value="baf"/>
    <property type="match status" value="1"/>
</dbReference>
<dbReference type="NCBIfam" id="NF009857">
    <property type="entry name" value="PRK13322.1-2"/>
    <property type="match status" value="1"/>
</dbReference>
<dbReference type="NCBIfam" id="NF009859">
    <property type="entry name" value="PRK13322.1-4"/>
    <property type="match status" value="1"/>
</dbReference>
<dbReference type="PANTHER" id="PTHR34265">
    <property type="entry name" value="TYPE III PANTOTHENATE KINASE"/>
    <property type="match status" value="1"/>
</dbReference>
<dbReference type="PANTHER" id="PTHR34265:SF1">
    <property type="entry name" value="TYPE III PANTOTHENATE KINASE"/>
    <property type="match status" value="1"/>
</dbReference>
<dbReference type="Pfam" id="PF03309">
    <property type="entry name" value="Pan_kinase"/>
    <property type="match status" value="1"/>
</dbReference>
<dbReference type="SUPFAM" id="SSF53067">
    <property type="entry name" value="Actin-like ATPase domain"/>
    <property type="match status" value="2"/>
</dbReference>
<evidence type="ECO:0000250" key="1"/>
<evidence type="ECO:0000255" key="2"/>
<evidence type="ECO:0000269" key="3">
    <source>
    </source>
</evidence>
<evidence type="ECO:0000305" key="4"/>
<evidence type="ECO:0000305" key="5">
    <source>
    </source>
</evidence>
<evidence type="ECO:0007829" key="6">
    <source>
        <dbReference type="PDB" id="2F9W"/>
    </source>
</evidence>
<proteinExistence type="evidence at protein level"/>
<keyword id="KW-0002">3D-structure</keyword>
<keyword id="KW-0046">Antibiotic resistance</keyword>
<keyword id="KW-0067">ATP-binding</keyword>
<keyword id="KW-0173">Coenzyme A biosynthesis</keyword>
<keyword id="KW-0963">Cytoplasm</keyword>
<keyword id="KW-0418">Kinase</keyword>
<keyword id="KW-0479">Metal-binding</keyword>
<keyword id="KW-0547">Nucleotide-binding</keyword>
<keyword id="KW-0630">Potassium</keyword>
<keyword id="KW-1185">Reference proteome</keyword>
<keyword id="KW-0808">Transferase</keyword>